<protein>
    <recommendedName>
        <fullName evidence="1">Protein GrpE</fullName>
    </recommendedName>
    <alternativeName>
        <fullName evidence="1">HSP-70 cofactor</fullName>
    </alternativeName>
</protein>
<feature type="chain" id="PRO_1000053632" description="Protein GrpE">
    <location>
        <begin position="1"/>
        <end position="206"/>
    </location>
</feature>
<feature type="region of interest" description="Disordered" evidence="2">
    <location>
        <begin position="1"/>
        <end position="36"/>
    </location>
</feature>
<keyword id="KW-0143">Chaperone</keyword>
<keyword id="KW-0963">Cytoplasm</keyword>
<keyword id="KW-1185">Reference proteome</keyword>
<keyword id="KW-0346">Stress response</keyword>
<proteinExistence type="inferred from homology"/>
<accession>Q2J322</accession>
<organism>
    <name type="scientific">Rhodopseudomonas palustris (strain HaA2)</name>
    <dbReference type="NCBI Taxonomy" id="316058"/>
    <lineage>
        <taxon>Bacteria</taxon>
        <taxon>Pseudomonadati</taxon>
        <taxon>Pseudomonadota</taxon>
        <taxon>Alphaproteobacteria</taxon>
        <taxon>Hyphomicrobiales</taxon>
        <taxon>Nitrobacteraceae</taxon>
        <taxon>Rhodopseudomonas</taxon>
    </lineage>
</organism>
<reference key="1">
    <citation type="submission" date="2006-01" db="EMBL/GenBank/DDBJ databases">
        <title>Complete sequence of Rhodopseudomonas palustris HaA2.</title>
        <authorList>
            <consortium name="US DOE Joint Genome Institute"/>
            <person name="Copeland A."/>
            <person name="Lucas S."/>
            <person name="Lapidus A."/>
            <person name="Barry K."/>
            <person name="Detter J.C."/>
            <person name="Glavina T."/>
            <person name="Hammon N."/>
            <person name="Israni S."/>
            <person name="Pitluck S."/>
            <person name="Chain P."/>
            <person name="Malfatti S."/>
            <person name="Shin M."/>
            <person name="Vergez L."/>
            <person name="Schmutz J."/>
            <person name="Larimer F."/>
            <person name="Land M."/>
            <person name="Hauser L."/>
            <person name="Pelletier D.A."/>
            <person name="Kyrpides N."/>
            <person name="Anderson I."/>
            <person name="Oda Y."/>
            <person name="Harwood C.S."/>
            <person name="Richardson P."/>
        </authorList>
    </citation>
    <scope>NUCLEOTIDE SEQUENCE [LARGE SCALE GENOMIC DNA]</scope>
    <source>
        <strain>HaA2</strain>
    </source>
</reference>
<name>GRPE_RHOP2</name>
<evidence type="ECO:0000255" key="1">
    <source>
        <dbReference type="HAMAP-Rule" id="MF_01151"/>
    </source>
</evidence>
<evidence type="ECO:0000256" key="2">
    <source>
        <dbReference type="SAM" id="MobiDB-lite"/>
    </source>
</evidence>
<gene>
    <name evidence="1" type="primary">grpE</name>
    <name type="ordered locus">RPB_0427</name>
</gene>
<sequence length="206" mass="21945">MTDSNGPKDNNQDQAQAAADPVVSKPYIMPDDPEDGANEALIKEAAEARDKMLRTLAEMENLRRRTQKEVADARTYGVSAFARDVLEIADNLQRALDAVPAEARANADAGLKGLIEGVELTERSLINALEKNGVRKFDPSGEKFDPNFQQAMYEVPDPSVPAGTVVQVVQAGFMIGERVLRPALVGVAKGGAKPAPAATNGTDTTA</sequence>
<comment type="function">
    <text evidence="1">Participates actively in the response to hyperosmotic and heat shock by preventing the aggregation of stress-denatured proteins, in association with DnaK and GrpE. It is the nucleotide exchange factor for DnaK and may function as a thermosensor. Unfolded proteins bind initially to DnaJ; upon interaction with the DnaJ-bound protein, DnaK hydrolyzes its bound ATP, resulting in the formation of a stable complex. GrpE releases ADP from DnaK; ATP binding to DnaK triggers the release of the substrate protein, thus completing the reaction cycle. Several rounds of ATP-dependent interactions between DnaJ, DnaK and GrpE are required for fully efficient folding.</text>
</comment>
<comment type="subunit">
    <text evidence="1">Homodimer.</text>
</comment>
<comment type="subcellular location">
    <subcellularLocation>
        <location evidence="1">Cytoplasm</location>
    </subcellularLocation>
</comment>
<comment type="similarity">
    <text evidence="1">Belongs to the GrpE family.</text>
</comment>
<dbReference type="EMBL" id="CP000250">
    <property type="protein sequence ID" value="ABD05138.1"/>
    <property type="molecule type" value="Genomic_DNA"/>
</dbReference>
<dbReference type="RefSeq" id="WP_011439328.1">
    <property type="nucleotide sequence ID" value="NC_007778.1"/>
</dbReference>
<dbReference type="SMR" id="Q2J322"/>
<dbReference type="STRING" id="316058.RPB_0427"/>
<dbReference type="KEGG" id="rpb:RPB_0427"/>
<dbReference type="eggNOG" id="COG0576">
    <property type="taxonomic scope" value="Bacteria"/>
</dbReference>
<dbReference type="HOGENOM" id="CLU_057217_6_2_5"/>
<dbReference type="OrthoDB" id="9789811at2"/>
<dbReference type="Proteomes" id="UP000008809">
    <property type="component" value="Chromosome"/>
</dbReference>
<dbReference type="GO" id="GO:0005737">
    <property type="term" value="C:cytoplasm"/>
    <property type="evidence" value="ECO:0007669"/>
    <property type="project" value="UniProtKB-SubCell"/>
</dbReference>
<dbReference type="GO" id="GO:0000774">
    <property type="term" value="F:adenyl-nucleotide exchange factor activity"/>
    <property type="evidence" value="ECO:0007669"/>
    <property type="project" value="InterPro"/>
</dbReference>
<dbReference type="GO" id="GO:0042803">
    <property type="term" value="F:protein homodimerization activity"/>
    <property type="evidence" value="ECO:0007669"/>
    <property type="project" value="InterPro"/>
</dbReference>
<dbReference type="GO" id="GO:0051087">
    <property type="term" value="F:protein-folding chaperone binding"/>
    <property type="evidence" value="ECO:0007669"/>
    <property type="project" value="InterPro"/>
</dbReference>
<dbReference type="GO" id="GO:0051082">
    <property type="term" value="F:unfolded protein binding"/>
    <property type="evidence" value="ECO:0007669"/>
    <property type="project" value="TreeGrafter"/>
</dbReference>
<dbReference type="GO" id="GO:0006457">
    <property type="term" value="P:protein folding"/>
    <property type="evidence" value="ECO:0007669"/>
    <property type="project" value="InterPro"/>
</dbReference>
<dbReference type="CDD" id="cd00446">
    <property type="entry name" value="GrpE"/>
    <property type="match status" value="1"/>
</dbReference>
<dbReference type="FunFam" id="2.30.22.10:FF:000002">
    <property type="entry name" value="GrpE protein homolog"/>
    <property type="match status" value="1"/>
</dbReference>
<dbReference type="Gene3D" id="3.90.20.20">
    <property type="match status" value="1"/>
</dbReference>
<dbReference type="Gene3D" id="2.30.22.10">
    <property type="entry name" value="Head domain of nucleotide exchange factor GrpE"/>
    <property type="match status" value="1"/>
</dbReference>
<dbReference type="HAMAP" id="MF_01151">
    <property type="entry name" value="GrpE"/>
    <property type="match status" value="1"/>
</dbReference>
<dbReference type="InterPro" id="IPR000740">
    <property type="entry name" value="GrpE"/>
</dbReference>
<dbReference type="InterPro" id="IPR013805">
    <property type="entry name" value="GrpE_coiled_coil"/>
</dbReference>
<dbReference type="InterPro" id="IPR009012">
    <property type="entry name" value="GrpE_head"/>
</dbReference>
<dbReference type="NCBIfam" id="NF010739">
    <property type="entry name" value="PRK14141.1"/>
    <property type="match status" value="1"/>
</dbReference>
<dbReference type="PANTHER" id="PTHR21237">
    <property type="entry name" value="GRPE PROTEIN"/>
    <property type="match status" value="1"/>
</dbReference>
<dbReference type="PANTHER" id="PTHR21237:SF23">
    <property type="entry name" value="GRPE PROTEIN HOMOLOG, MITOCHONDRIAL"/>
    <property type="match status" value="1"/>
</dbReference>
<dbReference type="Pfam" id="PF01025">
    <property type="entry name" value="GrpE"/>
    <property type="match status" value="1"/>
</dbReference>
<dbReference type="PRINTS" id="PR00773">
    <property type="entry name" value="GRPEPROTEIN"/>
</dbReference>
<dbReference type="SUPFAM" id="SSF58014">
    <property type="entry name" value="Coiled-coil domain of nucleotide exchange factor GrpE"/>
    <property type="match status" value="1"/>
</dbReference>
<dbReference type="SUPFAM" id="SSF51064">
    <property type="entry name" value="Head domain of nucleotide exchange factor GrpE"/>
    <property type="match status" value="1"/>
</dbReference>
<dbReference type="PROSITE" id="PS01071">
    <property type="entry name" value="GRPE"/>
    <property type="match status" value="1"/>
</dbReference>